<dbReference type="EMBL" id="AP009366">
    <property type="protein sequence ID" value="BAF49768.1"/>
    <property type="molecule type" value="Genomic_DNA"/>
</dbReference>
<dbReference type="RefSeq" id="YP_001122944.1">
    <property type="nucleotide sequence ID" value="NC_009265.1"/>
</dbReference>
<dbReference type="SMR" id="A4QJB3"/>
<dbReference type="GeneID" id="4968559"/>
<dbReference type="GO" id="GO:0009507">
    <property type="term" value="C:chloroplast"/>
    <property type="evidence" value="ECO:0007669"/>
    <property type="project" value="UniProtKB-SubCell"/>
</dbReference>
<dbReference type="GO" id="GO:0015935">
    <property type="term" value="C:small ribosomal subunit"/>
    <property type="evidence" value="ECO:0007669"/>
    <property type="project" value="TreeGrafter"/>
</dbReference>
<dbReference type="GO" id="GO:0019843">
    <property type="term" value="F:rRNA binding"/>
    <property type="evidence" value="ECO:0007669"/>
    <property type="project" value="UniProtKB-UniRule"/>
</dbReference>
<dbReference type="GO" id="GO:0003735">
    <property type="term" value="F:structural constituent of ribosome"/>
    <property type="evidence" value="ECO:0007669"/>
    <property type="project" value="InterPro"/>
</dbReference>
<dbReference type="GO" id="GO:0006412">
    <property type="term" value="P:translation"/>
    <property type="evidence" value="ECO:0007669"/>
    <property type="project" value="UniProtKB-UniRule"/>
</dbReference>
<dbReference type="FunFam" id="1.10.287.1480:FF:000001">
    <property type="entry name" value="30S ribosomal protein S14"/>
    <property type="match status" value="1"/>
</dbReference>
<dbReference type="Gene3D" id="1.10.287.1480">
    <property type="match status" value="1"/>
</dbReference>
<dbReference type="HAMAP" id="MF_00537">
    <property type="entry name" value="Ribosomal_uS14_1"/>
    <property type="match status" value="1"/>
</dbReference>
<dbReference type="InterPro" id="IPR001209">
    <property type="entry name" value="Ribosomal_uS14"/>
</dbReference>
<dbReference type="InterPro" id="IPR023036">
    <property type="entry name" value="Ribosomal_uS14_bac/plastid"/>
</dbReference>
<dbReference type="InterPro" id="IPR018271">
    <property type="entry name" value="Ribosomal_uS14_CS"/>
</dbReference>
<dbReference type="NCBIfam" id="NF006477">
    <property type="entry name" value="PRK08881.1"/>
    <property type="match status" value="1"/>
</dbReference>
<dbReference type="PANTHER" id="PTHR19836">
    <property type="entry name" value="30S RIBOSOMAL PROTEIN S14"/>
    <property type="match status" value="1"/>
</dbReference>
<dbReference type="PANTHER" id="PTHR19836:SF19">
    <property type="entry name" value="SMALL RIBOSOMAL SUBUNIT PROTEIN US14M"/>
    <property type="match status" value="1"/>
</dbReference>
<dbReference type="Pfam" id="PF00253">
    <property type="entry name" value="Ribosomal_S14"/>
    <property type="match status" value="1"/>
</dbReference>
<dbReference type="SUPFAM" id="SSF57716">
    <property type="entry name" value="Glucocorticoid receptor-like (DNA-binding domain)"/>
    <property type="match status" value="1"/>
</dbReference>
<dbReference type="PROSITE" id="PS00527">
    <property type="entry name" value="RIBOSOMAL_S14"/>
    <property type="match status" value="1"/>
</dbReference>
<keyword id="KW-0150">Chloroplast</keyword>
<keyword id="KW-0934">Plastid</keyword>
<keyword id="KW-0687">Ribonucleoprotein</keyword>
<keyword id="KW-0689">Ribosomal protein</keyword>
<keyword id="KW-0694">RNA-binding</keyword>
<keyword id="KW-0699">rRNA-binding</keyword>
<feature type="chain" id="PRO_0000354395" description="Small ribosomal subunit protein uS14c">
    <location>
        <begin position="1"/>
        <end position="100"/>
    </location>
</feature>
<protein>
    <recommendedName>
        <fullName evidence="1">Small ribosomal subunit protein uS14c</fullName>
    </recommendedName>
    <alternativeName>
        <fullName evidence="2">30S ribosomal protein S14, chloroplastic</fullName>
    </alternativeName>
</protein>
<name>RR14_AETCO</name>
<comment type="function">
    <text evidence="1">Binds 16S rRNA, required for the assembly of 30S particles.</text>
</comment>
<comment type="subunit">
    <text evidence="1">Part of the 30S ribosomal subunit.</text>
</comment>
<comment type="subcellular location">
    <subcellularLocation>
        <location>Plastid</location>
        <location>Chloroplast</location>
    </subcellularLocation>
</comment>
<comment type="similarity">
    <text evidence="1">Belongs to the universal ribosomal protein uS14 family.</text>
</comment>
<proteinExistence type="inferred from homology"/>
<gene>
    <name evidence="1" type="primary">rps14</name>
</gene>
<sequence length="100" mass="11726">MAKKSLIYREKKRQKLEEKYHLIRRSSKKEISKIPSLSDKWKIHGKLQSPPRNSAPTRLHRRCFSTGRPRATYRDFGLSGHILREMVHACLLPGATRSSW</sequence>
<evidence type="ECO:0000255" key="1">
    <source>
        <dbReference type="HAMAP-Rule" id="MF_00537"/>
    </source>
</evidence>
<evidence type="ECO:0000305" key="2"/>
<accession>A4QJB3</accession>
<organism>
    <name type="scientific">Aethionema cordifolium</name>
    <name type="common">Lebanon stonecress</name>
    <dbReference type="NCBI Taxonomy" id="434059"/>
    <lineage>
        <taxon>Eukaryota</taxon>
        <taxon>Viridiplantae</taxon>
        <taxon>Streptophyta</taxon>
        <taxon>Embryophyta</taxon>
        <taxon>Tracheophyta</taxon>
        <taxon>Spermatophyta</taxon>
        <taxon>Magnoliopsida</taxon>
        <taxon>eudicotyledons</taxon>
        <taxon>Gunneridae</taxon>
        <taxon>Pentapetalae</taxon>
        <taxon>rosids</taxon>
        <taxon>malvids</taxon>
        <taxon>Brassicales</taxon>
        <taxon>Brassicaceae</taxon>
        <taxon>Aethionemeae</taxon>
        <taxon>Aethionema</taxon>
    </lineage>
</organism>
<reference key="1">
    <citation type="submission" date="2007-03" db="EMBL/GenBank/DDBJ databases">
        <title>Sequencing analysis of Aethionema coridifolium chloroplast DNA.</title>
        <authorList>
            <person name="Hosouchi T."/>
            <person name="Tsuruoka H."/>
            <person name="Kotani H."/>
        </authorList>
    </citation>
    <scope>NUCLEOTIDE SEQUENCE [LARGE SCALE GENOMIC DNA]</scope>
</reference>
<geneLocation type="chloroplast"/>